<proteinExistence type="inferred from homology"/>
<keyword id="KW-0238">DNA-binding</keyword>
<keyword id="KW-0804">Transcription</keyword>
<keyword id="KW-0805">Transcription regulation</keyword>
<sequence>MEKFPMTPRGFEKLKEELRWRQQSERPRIIEAIAEARAHGDLSENAEYHAAKEAQSLNEGRINELEDLVARAEVIDVSKLTGDRIKFGATVTMIDEDTEEEKIYQIVGDQEADVKEGRISISSPIARALIGKGEGDTIEVNAPGGSRSYEIIALKFV</sequence>
<comment type="function">
    <text evidence="1">Necessary for efficient RNA polymerase transcription elongation past template-encoded arresting sites. The arresting sites in DNA have the property of trapping a certain fraction of elongating RNA polymerases that pass through, resulting in locked ternary complexes. Cleavage of the nascent transcript by cleavage factors such as GreA or GreB allows the resumption of elongation from the new 3'terminus. GreA releases sequences of 2 to 3 nucleotides.</text>
</comment>
<comment type="similarity">
    <text evidence="1">Belongs to the GreA/GreB family.</text>
</comment>
<evidence type="ECO:0000255" key="1">
    <source>
        <dbReference type="HAMAP-Rule" id="MF_00105"/>
    </source>
</evidence>
<organism>
    <name type="scientific">Brucella melitensis biotype 2 (strain ATCC 23457)</name>
    <dbReference type="NCBI Taxonomy" id="546272"/>
    <lineage>
        <taxon>Bacteria</taxon>
        <taxon>Pseudomonadati</taxon>
        <taxon>Pseudomonadota</taxon>
        <taxon>Alphaproteobacteria</taxon>
        <taxon>Hyphomicrobiales</taxon>
        <taxon>Brucellaceae</taxon>
        <taxon>Brucella/Ochrobactrum group</taxon>
        <taxon>Brucella</taxon>
    </lineage>
</organism>
<feature type="chain" id="PRO_1000118949" description="Transcription elongation factor GreA">
    <location>
        <begin position="1"/>
        <end position="157"/>
    </location>
</feature>
<reference key="1">
    <citation type="submission" date="2009-03" db="EMBL/GenBank/DDBJ databases">
        <title>Brucella melitensis ATCC 23457 whole genome shotgun sequencing project.</title>
        <authorList>
            <person name="Setubal J.C."/>
            <person name="Boyle S."/>
            <person name="Crasta O.R."/>
            <person name="Gillespie J.J."/>
            <person name="Kenyon R.W."/>
            <person name="Lu J."/>
            <person name="Mane S."/>
            <person name="Nagrani S."/>
            <person name="Shallom J.M."/>
            <person name="Shallom S."/>
            <person name="Shukla M."/>
            <person name="Snyder E.E."/>
            <person name="Sobral B.W."/>
            <person name="Wattam A.R."/>
            <person name="Will R."/>
            <person name="Williams K."/>
            <person name="Yoo H."/>
            <person name="Munk C."/>
            <person name="Tapia R."/>
            <person name="Han C."/>
            <person name="Detter J.C."/>
            <person name="Bruce D."/>
            <person name="Brettin T.S."/>
        </authorList>
    </citation>
    <scope>NUCLEOTIDE SEQUENCE [LARGE SCALE GENOMIC DNA]</scope>
    <source>
        <strain>ATCC 23457</strain>
    </source>
</reference>
<dbReference type="EMBL" id="CP001488">
    <property type="protein sequence ID" value="ACO01262.1"/>
    <property type="molecule type" value="Genomic_DNA"/>
</dbReference>
<dbReference type="RefSeq" id="WP_002964610.1">
    <property type="nucleotide sequence ID" value="NC_012441.1"/>
</dbReference>
<dbReference type="SMR" id="C0REE0"/>
<dbReference type="GeneID" id="93016210"/>
<dbReference type="KEGG" id="bmi:BMEA_A1555"/>
<dbReference type="HOGENOM" id="CLU_101379_2_0_5"/>
<dbReference type="Proteomes" id="UP000001748">
    <property type="component" value="Chromosome I"/>
</dbReference>
<dbReference type="GO" id="GO:0003677">
    <property type="term" value="F:DNA binding"/>
    <property type="evidence" value="ECO:0007669"/>
    <property type="project" value="UniProtKB-UniRule"/>
</dbReference>
<dbReference type="GO" id="GO:0070063">
    <property type="term" value="F:RNA polymerase binding"/>
    <property type="evidence" value="ECO:0007669"/>
    <property type="project" value="InterPro"/>
</dbReference>
<dbReference type="GO" id="GO:0006354">
    <property type="term" value="P:DNA-templated transcription elongation"/>
    <property type="evidence" value="ECO:0007669"/>
    <property type="project" value="TreeGrafter"/>
</dbReference>
<dbReference type="GO" id="GO:0032784">
    <property type="term" value="P:regulation of DNA-templated transcription elongation"/>
    <property type="evidence" value="ECO:0007669"/>
    <property type="project" value="UniProtKB-UniRule"/>
</dbReference>
<dbReference type="FunFam" id="1.10.287.180:FF:000001">
    <property type="entry name" value="Transcription elongation factor GreA"/>
    <property type="match status" value="1"/>
</dbReference>
<dbReference type="FunFam" id="3.10.50.30:FF:000001">
    <property type="entry name" value="Transcription elongation factor GreA"/>
    <property type="match status" value="1"/>
</dbReference>
<dbReference type="Gene3D" id="3.10.50.30">
    <property type="entry name" value="Transcription elongation factor, GreA/GreB, C-terminal domain"/>
    <property type="match status" value="1"/>
</dbReference>
<dbReference type="Gene3D" id="1.10.287.180">
    <property type="entry name" value="Transcription elongation factor, GreA/GreB, N-terminal domain"/>
    <property type="match status" value="1"/>
</dbReference>
<dbReference type="HAMAP" id="MF_00105">
    <property type="entry name" value="GreA_GreB"/>
    <property type="match status" value="1"/>
</dbReference>
<dbReference type="InterPro" id="IPR036953">
    <property type="entry name" value="GreA/GreB_C_sf"/>
</dbReference>
<dbReference type="InterPro" id="IPR018151">
    <property type="entry name" value="TF_GreA/GreB_CS"/>
</dbReference>
<dbReference type="InterPro" id="IPR006359">
    <property type="entry name" value="Tscrpt_elong_fac_GreA"/>
</dbReference>
<dbReference type="InterPro" id="IPR028624">
    <property type="entry name" value="Tscrpt_elong_fac_GreA/B"/>
</dbReference>
<dbReference type="InterPro" id="IPR001437">
    <property type="entry name" value="Tscrpt_elong_fac_GreA/B_C"/>
</dbReference>
<dbReference type="InterPro" id="IPR023459">
    <property type="entry name" value="Tscrpt_elong_fac_GreA/B_fam"/>
</dbReference>
<dbReference type="InterPro" id="IPR022691">
    <property type="entry name" value="Tscrpt_elong_fac_GreA/B_N"/>
</dbReference>
<dbReference type="InterPro" id="IPR036805">
    <property type="entry name" value="Tscrpt_elong_fac_GreA/B_N_sf"/>
</dbReference>
<dbReference type="NCBIfam" id="TIGR01462">
    <property type="entry name" value="greA"/>
    <property type="match status" value="1"/>
</dbReference>
<dbReference type="NCBIfam" id="NF001261">
    <property type="entry name" value="PRK00226.1-2"/>
    <property type="match status" value="1"/>
</dbReference>
<dbReference type="NCBIfam" id="NF001263">
    <property type="entry name" value="PRK00226.1-4"/>
    <property type="match status" value="1"/>
</dbReference>
<dbReference type="NCBIfam" id="NF001264">
    <property type="entry name" value="PRK00226.1-5"/>
    <property type="match status" value="1"/>
</dbReference>
<dbReference type="PANTHER" id="PTHR30437">
    <property type="entry name" value="TRANSCRIPTION ELONGATION FACTOR GREA"/>
    <property type="match status" value="1"/>
</dbReference>
<dbReference type="PANTHER" id="PTHR30437:SF4">
    <property type="entry name" value="TRANSCRIPTION ELONGATION FACTOR GREA"/>
    <property type="match status" value="1"/>
</dbReference>
<dbReference type="Pfam" id="PF01272">
    <property type="entry name" value="GreA_GreB"/>
    <property type="match status" value="1"/>
</dbReference>
<dbReference type="Pfam" id="PF03449">
    <property type="entry name" value="GreA_GreB_N"/>
    <property type="match status" value="1"/>
</dbReference>
<dbReference type="PIRSF" id="PIRSF006092">
    <property type="entry name" value="GreA_GreB"/>
    <property type="match status" value="1"/>
</dbReference>
<dbReference type="SUPFAM" id="SSF54534">
    <property type="entry name" value="FKBP-like"/>
    <property type="match status" value="1"/>
</dbReference>
<dbReference type="SUPFAM" id="SSF46557">
    <property type="entry name" value="GreA transcript cleavage protein, N-terminal domain"/>
    <property type="match status" value="1"/>
</dbReference>
<dbReference type="PROSITE" id="PS00829">
    <property type="entry name" value="GREAB_1"/>
    <property type="match status" value="1"/>
</dbReference>
<dbReference type="PROSITE" id="PS00830">
    <property type="entry name" value="GREAB_2"/>
    <property type="match status" value="1"/>
</dbReference>
<gene>
    <name evidence="1" type="primary">greA</name>
    <name type="ordered locus">BMEA_A1555</name>
</gene>
<name>GREA_BRUMB</name>
<accession>C0REE0</accession>
<protein>
    <recommendedName>
        <fullName evidence="1">Transcription elongation factor GreA</fullName>
    </recommendedName>
    <alternativeName>
        <fullName evidence="1">Transcript cleavage factor GreA</fullName>
    </alternativeName>
</protein>